<feature type="transit peptide" description="Mitochondrion" evidence="3">
    <location>
        <begin position="1"/>
        <end position="87"/>
    </location>
</feature>
<feature type="chain" id="PRO_0000007398" description="Dynamin-like GTPase OPA1, long form">
    <location>
        <begin position="88"/>
        <end position="960"/>
    </location>
</feature>
<feature type="chain" id="PRO_0000253480" description="Dynamin-like GTPase OPA1, short form" evidence="3">
    <location>
        <begin position="195"/>
        <end position="960"/>
    </location>
</feature>
<feature type="topological domain" description="Mitochondrial matrix" evidence="2">
    <location>
        <begin position="88"/>
        <end position="96"/>
    </location>
</feature>
<feature type="transmembrane region" description="Helical" evidence="4">
    <location>
        <begin position="97"/>
        <end position="113"/>
    </location>
</feature>
<feature type="topological domain" description="Mitochondrial intermembrane" evidence="2">
    <location>
        <begin position="114"/>
        <end position="770"/>
    </location>
</feature>
<feature type="intramembrane region" evidence="2">
    <location>
        <begin position="771"/>
        <end position="781"/>
    </location>
</feature>
<feature type="topological domain" description="Mitochondrial intermembrane" evidence="32">
    <location>
        <begin position="782"/>
        <end position="960"/>
    </location>
</feature>
<feature type="domain" description="Dynamin-type G" evidence="5">
    <location>
        <begin position="285"/>
        <end position="561"/>
    </location>
</feature>
<feature type="region of interest" description="G1 motif" evidence="5">
    <location>
        <begin position="295"/>
        <end position="302"/>
    </location>
</feature>
<feature type="region of interest" description="G2 motif" evidence="5">
    <location>
        <begin position="321"/>
        <end position="324"/>
    </location>
</feature>
<feature type="region of interest" description="G3 motif" evidence="5">
    <location>
        <begin position="398"/>
        <end position="401"/>
    </location>
</feature>
<feature type="region of interest" description="G4 motif" evidence="5">
    <location>
        <begin position="467"/>
        <end position="470"/>
    </location>
</feature>
<feature type="region of interest" description="G5 motif" evidence="5">
    <location>
        <begin position="501"/>
        <end position="504"/>
    </location>
</feature>
<feature type="region of interest" description="Stalk region" evidence="2">
    <location>
        <begin position="589"/>
        <end position="836"/>
    </location>
</feature>
<feature type="region of interest" description="Paddle region" evidence="2">
    <location>
        <begin position="736"/>
        <end position="856"/>
    </location>
</feature>
<feature type="region of interest" description="Stalk region" evidence="2">
    <location>
        <begin position="874"/>
        <end position="928"/>
    </location>
</feature>
<feature type="coiled-coil region" evidence="4">
    <location>
        <begin position="210"/>
        <end position="254"/>
    </location>
</feature>
<feature type="coiled-coil region" evidence="4">
    <location>
        <begin position="895"/>
        <end position="960"/>
    </location>
</feature>
<feature type="binding site" evidence="2">
    <location>
        <position position="298"/>
    </location>
    <ligand>
        <name>GTP</name>
        <dbReference type="ChEBI" id="CHEBI:37565"/>
    </ligand>
</feature>
<feature type="binding site" evidence="2">
    <location>
        <position position="300"/>
    </location>
    <ligand>
        <name>GTP</name>
        <dbReference type="ChEBI" id="CHEBI:37565"/>
    </ligand>
</feature>
<feature type="binding site" evidence="2">
    <location>
        <position position="301"/>
    </location>
    <ligand>
        <name>GTP</name>
        <dbReference type="ChEBI" id="CHEBI:37565"/>
    </ligand>
</feature>
<feature type="binding site" evidence="2">
    <location>
        <position position="302"/>
    </location>
    <ligand>
        <name>GTP</name>
        <dbReference type="ChEBI" id="CHEBI:37565"/>
    </ligand>
</feature>
<feature type="binding site" evidence="2">
    <location>
        <position position="302"/>
    </location>
    <ligand>
        <name>Mg(2+)</name>
        <dbReference type="ChEBI" id="CHEBI:18420"/>
    </ligand>
</feature>
<feature type="binding site" evidence="2">
    <location>
        <position position="303"/>
    </location>
    <ligand>
        <name>GTP</name>
        <dbReference type="ChEBI" id="CHEBI:37565"/>
    </ligand>
</feature>
<feature type="binding site" evidence="2">
    <location>
        <position position="317"/>
    </location>
    <ligand>
        <name>GTP</name>
        <dbReference type="ChEBI" id="CHEBI:37565"/>
    </ligand>
</feature>
<feature type="binding site" evidence="2">
    <location>
        <position position="323"/>
    </location>
    <ligand>
        <name>Mg(2+)</name>
        <dbReference type="ChEBI" id="CHEBI:18420"/>
    </ligand>
</feature>
<feature type="binding site" evidence="2">
    <location>
        <position position="398"/>
    </location>
    <ligand>
        <name>Mg(2+)</name>
        <dbReference type="ChEBI" id="CHEBI:18420"/>
    </ligand>
</feature>
<feature type="binding site" evidence="2">
    <location>
        <position position="468"/>
    </location>
    <ligand>
        <name>GTP</name>
        <dbReference type="ChEBI" id="CHEBI:37565"/>
    </ligand>
</feature>
<feature type="binding site" evidence="2">
    <location>
        <position position="470"/>
    </location>
    <ligand>
        <name>GTP</name>
        <dbReference type="ChEBI" id="CHEBI:37565"/>
    </ligand>
</feature>
<feature type="binding site" evidence="2">
    <location>
        <position position="503"/>
    </location>
    <ligand>
        <name>GTP</name>
        <dbReference type="ChEBI" id="CHEBI:37565"/>
    </ligand>
</feature>
<feature type="site" description="Cleavage at site S1" evidence="3">
    <location>
        <begin position="194"/>
        <end position="195"/>
    </location>
</feature>
<feature type="modified residue" description="N6-acetyllysine" evidence="2">
    <location>
        <position position="228"/>
    </location>
</feature>
<feature type="disulfide bond" evidence="2">
    <location>
        <begin position="856"/>
        <end position="874"/>
    </location>
</feature>
<feature type="splice variant" id="VSP_062329" description="In isoform 3.">
    <original>A</original>
    <variation>AGPKLVSEVLEVSEALLLL</variation>
    <location>
        <position position="185"/>
    </location>
</feature>
<feature type="splice variant" id="VSP_021037" description="In isoform 2." evidence="29">
    <original>K</original>
    <variation>KGLLGELILLQQQIQEHEEEARRAAGQYSTSYAQQKRK</variation>
    <location>
        <position position="208"/>
    </location>
</feature>
<feature type="mutagenesis site" description="Knockin mice show embryonic lethality at 9 days post coitum (dpc)." evidence="11">
    <location>
        <begin position="285"/>
        <end position="960"/>
    </location>
</feature>
<feature type="mutagenesis site" description="Impaired ability to mediate mitochondrial inner membrane fusion without affecting cristae structures." evidence="20">
    <original>Q</original>
    <variation>V</variation>
    <location>
        <position position="297"/>
    </location>
</feature>
<feature type="mutagenesis site" description="Abolished GTPase activity." evidence="22">
    <original>G</original>
    <variation>E</variation>
    <location>
        <position position="300"/>
    </location>
</feature>
<feature type="sequence conflict" description="In Ref. 2; BAC30002." evidence="32" ref="2">
    <original>L</original>
    <variation>P</variation>
    <location>
        <position position="236"/>
    </location>
</feature>
<feature type="sequence conflict" description="In Ref. 2; BAC32021." evidence="32" ref="2">
    <original>TL</original>
    <variation>NN</variation>
    <location>
        <begin position="330"/>
        <end position="331"/>
    </location>
</feature>
<feature type="short sequence motif" description="LQQQIQ motif" evidence="3">
    <location sequence="P58281-2">
        <begin position="217"/>
        <end position="222"/>
    </location>
</feature>
<feature type="site" description="Cleavage at site S3" evidence="33">
    <location sequence="P58281-3">
        <begin position="200"/>
        <end position="201"/>
    </location>
</feature>
<feature type="site" description="Cleavage at site S3" evidence="33">
    <location sequence="P58281-3">
        <begin position="201"/>
        <end position="202"/>
    </location>
</feature>
<accession>P58281</accession>
<accession>A6H6Q3</accession>
<accession>H7BX01</accession>
<accession>Q3ULA5</accession>
<accession>Q8BKU7</accession>
<accession>Q8BLL3</accession>
<accession>Q8BM08</accession>
<accession>Q8R3J7</accession>
<gene>
    <name evidence="30 34" type="primary">Opa1</name>
</gene>
<name>OPA1_MOUSE</name>
<reference key="1">
    <citation type="journal article" date="2002" name="J. Biol. Chem.">
        <title>Primary structure of a dynamin-related mouse mitochondrial GTPase and its distribution in brain, subcellular localization, and effect on mitochondrial morphology.</title>
        <authorList>
            <person name="Misaka T."/>
            <person name="Miyashita T."/>
            <person name="Kubo Y."/>
        </authorList>
    </citation>
    <scope>NUCLEOTIDE SEQUENCE [MRNA] (ISOFORM 1)</scope>
    <scope>FUNCTION</scope>
    <scope>SUBCELLULAR LOCATION</scope>
    <scope>TISSUE SPECIFICITY</scope>
    <source>
        <tissue>Brain</tissue>
    </source>
</reference>
<reference key="2">
    <citation type="journal article" date="2005" name="Science">
        <title>The transcriptional landscape of the mammalian genome.</title>
        <authorList>
            <person name="Carninci P."/>
            <person name="Kasukawa T."/>
            <person name="Katayama S."/>
            <person name="Gough J."/>
            <person name="Frith M.C."/>
            <person name="Maeda N."/>
            <person name="Oyama R."/>
            <person name="Ravasi T."/>
            <person name="Lenhard B."/>
            <person name="Wells C."/>
            <person name="Kodzius R."/>
            <person name="Shimokawa K."/>
            <person name="Bajic V.B."/>
            <person name="Brenner S.E."/>
            <person name="Batalov S."/>
            <person name="Forrest A.R."/>
            <person name="Zavolan M."/>
            <person name="Davis M.J."/>
            <person name="Wilming L.G."/>
            <person name="Aidinis V."/>
            <person name="Allen J.E."/>
            <person name="Ambesi-Impiombato A."/>
            <person name="Apweiler R."/>
            <person name="Aturaliya R.N."/>
            <person name="Bailey T.L."/>
            <person name="Bansal M."/>
            <person name="Baxter L."/>
            <person name="Beisel K.W."/>
            <person name="Bersano T."/>
            <person name="Bono H."/>
            <person name="Chalk A.M."/>
            <person name="Chiu K.P."/>
            <person name="Choudhary V."/>
            <person name="Christoffels A."/>
            <person name="Clutterbuck D.R."/>
            <person name="Crowe M.L."/>
            <person name="Dalla E."/>
            <person name="Dalrymple B.P."/>
            <person name="de Bono B."/>
            <person name="Della Gatta G."/>
            <person name="di Bernardo D."/>
            <person name="Down T."/>
            <person name="Engstrom P."/>
            <person name="Fagiolini M."/>
            <person name="Faulkner G."/>
            <person name="Fletcher C.F."/>
            <person name="Fukushima T."/>
            <person name="Furuno M."/>
            <person name="Futaki S."/>
            <person name="Gariboldi M."/>
            <person name="Georgii-Hemming P."/>
            <person name="Gingeras T.R."/>
            <person name="Gojobori T."/>
            <person name="Green R.E."/>
            <person name="Gustincich S."/>
            <person name="Harbers M."/>
            <person name="Hayashi Y."/>
            <person name="Hensch T.K."/>
            <person name="Hirokawa N."/>
            <person name="Hill D."/>
            <person name="Huminiecki L."/>
            <person name="Iacono M."/>
            <person name="Ikeo K."/>
            <person name="Iwama A."/>
            <person name="Ishikawa T."/>
            <person name="Jakt M."/>
            <person name="Kanapin A."/>
            <person name="Katoh M."/>
            <person name="Kawasawa Y."/>
            <person name="Kelso J."/>
            <person name="Kitamura H."/>
            <person name="Kitano H."/>
            <person name="Kollias G."/>
            <person name="Krishnan S.P."/>
            <person name="Kruger A."/>
            <person name="Kummerfeld S.K."/>
            <person name="Kurochkin I.V."/>
            <person name="Lareau L.F."/>
            <person name="Lazarevic D."/>
            <person name="Lipovich L."/>
            <person name="Liu J."/>
            <person name="Liuni S."/>
            <person name="McWilliam S."/>
            <person name="Madan Babu M."/>
            <person name="Madera M."/>
            <person name="Marchionni L."/>
            <person name="Matsuda H."/>
            <person name="Matsuzawa S."/>
            <person name="Miki H."/>
            <person name="Mignone F."/>
            <person name="Miyake S."/>
            <person name="Morris K."/>
            <person name="Mottagui-Tabar S."/>
            <person name="Mulder N."/>
            <person name="Nakano N."/>
            <person name="Nakauchi H."/>
            <person name="Ng P."/>
            <person name="Nilsson R."/>
            <person name="Nishiguchi S."/>
            <person name="Nishikawa S."/>
            <person name="Nori F."/>
            <person name="Ohara O."/>
            <person name="Okazaki Y."/>
            <person name="Orlando V."/>
            <person name="Pang K.C."/>
            <person name="Pavan W.J."/>
            <person name="Pavesi G."/>
            <person name="Pesole G."/>
            <person name="Petrovsky N."/>
            <person name="Piazza S."/>
            <person name="Reed J."/>
            <person name="Reid J.F."/>
            <person name="Ring B.Z."/>
            <person name="Ringwald M."/>
            <person name="Rost B."/>
            <person name="Ruan Y."/>
            <person name="Salzberg S.L."/>
            <person name="Sandelin A."/>
            <person name="Schneider C."/>
            <person name="Schoenbach C."/>
            <person name="Sekiguchi K."/>
            <person name="Semple C.A."/>
            <person name="Seno S."/>
            <person name="Sessa L."/>
            <person name="Sheng Y."/>
            <person name="Shibata Y."/>
            <person name="Shimada H."/>
            <person name="Shimada K."/>
            <person name="Silva D."/>
            <person name="Sinclair B."/>
            <person name="Sperling S."/>
            <person name="Stupka E."/>
            <person name="Sugiura K."/>
            <person name="Sultana R."/>
            <person name="Takenaka Y."/>
            <person name="Taki K."/>
            <person name="Tammoja K."/>
            <person name="Tan S.L."/>
            <person name="Tang S."/>
            <person name="Taylor M.S."/>
            <person name="Tegner J."/>
            <person name="Teichmann S.A."/>
            <person name="Ueda H.R."/>
            <person name="van Nimwegen E."/>
            <person name="Verardo R."/>
            <person name="Wei C.L."/>
            <person name="Yagi K."/>
            <person name="Yamanishi H."/>
            <person name="Zabarovsky E."/>
            <person name="Zhu S."/>
            <person name="Zimmer A."/>
            <person name="Hide W."/>
            <person name="Bult C."/>
            <person name="Grimmond S.M."/>
            <person name="Teasdale R.D."/>
            <person name="Liu E.T."/>
            <person name="Brusic V."/>
            <person name="Quackenbush J."/>
            <person name="Wahlestedt C."/>
            <person name="Mattick J.S."/>
            <person name="Hume D.A."/>
            <person name="Kai C."/>
            <person name="Sasaki D."/>
            <person name="Tomaru Y."/>
            <person name="Fukuda S."/>
            <person name="Kanamori-Katayama M."/>
            <person name="Suzuki M."/>
            <person name="Aoki J."/>
            <person name="Arakawa T."/>
            <person name="Iida J."/>
            <person name="Imamura K."/>
            <person name="Itoh M."/>
            <person name="Kato T."/>
            <person name="Kawaji H."/>
            <person name="Kawagashira N."/>
            <person name="Kawashima T."/>
            <person name="Kojima M."/>
            <person name="Kondo S."/>
            <person name="Konno H."/>
            <person name="Nakano K."/>
            <person name="Ninomiya N."/>
            <person name="Nishio T."/>
            <person name="Okada M."/>
            <person name="Plessy C."/>
            <person name="Shibata K."/>
            <person name="Shiraki T."/>
            <person name="Suzuki S."/>
            <person name="Tagami M."/>
            <person name="Waki K."/>
            <person name="Watahiki A."/>
            <person name="Okamura-Oho Y."/>
            <person name="Suzuki H."/>
            <person name="Kawai J."/>
            <person name="Hayashizaki Y."/>
        </authorList>
    </citation>
    <scope>NUCLEOTIDE SEQUENCE [LARGE SCALE MRNA] (ISOFORM 1)</scope>
    <scope>NUCLEOTIDE SEQUENCE [LARGE SCALE MRNA] OF 1-365 (ISOFORM 2)</scope>
    <source>
        <strain>C57BL/6J</strain>
        <tissue>Blastocyst</tissue>
        <tissue>Hypothalamus</tissue>
        <tissue>Liver</tissue>
        <tissue>Retina</tissue>
        <tissue>Skin</tissue>
    </source>
</reference>
<reference key="3">
    <citation type="journal article" date="2009" name="PLoS Biol.">
        <title>Lineage-specific biology revealed by a finished genome assembly of the mouse.</title>
        <authorList>
            <person name="Church D.M."/>
            <person name="Goodstadt L."/>
            <person name="Hillier L.W."/>
            <person name="Zody M.C."/>
            <person name="Goldstein S."/>
            <person name="She X."/>
            <person name="Bult C.J."/>
            <person name="Agarwala R."/>
            <person name="Cherry J.L."/>
            <person name="DiCuccio M."/>
            <person name="Hlavina W."/>
            <person name="Kapustin Y."/>
            <person name="Meric P."/>
            <person name="Maglott D."/>
            <person name="Birtle Z."/>
            <person name="Marques A.C."/>
            <person name="Graves T."/>
            <person name="Zhou S."/>
            <person name="Teague B."/>
            <person name="Potamousis K."/>
            <person name="Churas C."/>
            <person name="Place M."/>
            <person name="Herschleb J."/>
            <person name="Runnheim R."/>
            <person name="Forrest D."/>
            <person name="Amos-Landgraf J."/>
            <person name="Schwartz D.C."/>
            <person name="Cheng Z."/>
            <person name="Lindblad-Toh K."/>
            <person name="Eichler E.E."/>
            <person name="Ponting C.P."/>
        </authorList>
    </citation>
    <scope>NUCLEOTIDE SEQUENCE [LARGE SCALE GENOMIC DNA]</scope>
    <source>
        <strain>C57BL/6J</strain>
    </source>
</reference>
<reference key="4">
    <citation type="journal article" date="2004" name="Genome Res.">
        <title>The status, quality, and expansion of the NIH full-length cDNA project: the Mammalian Gene Collection (MGC).</title>
        <authorList>
            <consortium name="The MGC Project Team"/>
        </authorList>
    </citation>
    <scope>NUCLEOTIDE SEQUENCE [LARGE SCALE MRNA] (ISOFORM 1)</scope>
    <source>
        <strain>Czech II</strain>
        <tissue>Brain</tissue>
        <tissue>Mammary gland</tissue>
    </source>
</reference>
<reference key="5">
    <citation type="journal article" date="2006" name="Cell">
        <title>Mitochondrial rhomboid PARL regulates cytochrome c release during apoptosis via OPA1-dependent cristae remodeling.</title>
        <authorList>
            <person name="Cipolat S."/>
            <person name="Rudka T."/>
            <person name="Hartmann D."/>
            <person name="Costa V."/>
            <person name="Serneels L."/>
            <person name="Craessaerts K."/>
            <person name="Metzger K."/>
            <person name="Frezza C."/>
            <person name="Annaert W."/>
            <person name="D'Adamio L."/>
            <person name="Derks C."/>
            <person name="Dejaegere T."/>
            <person name="Pellegrini L."/>
            <person name="D'Hooge R."/>
            <person name="Scorrano L."/>
            <person name="De Strooper B."/>
        </authorList>
    </citation>
    <scope>FUNCTION</scope>
    <scope>SUBCELLULAR LOCATION</scope>
</reference>
<reference key="6">
    <citation type="journal article" date="2006" name="Cell">
        <title>OPA1 controls apoptotic cristae remodeling independently from mitochondrial fusion.</title>
        <authorList>
            <person name="Frezza C."/>
            <person name="Cipolat S."/>
            <person name="Martins de Brito O."/>
            <person name="Micaroni M."/>
            <person name="Beznoussenko G.V."/>
            <person name="Rudka T."/>
            <person name="Bartoli D."/>
            <person name="Polishuck R.S."/>
            <person name="Danial N.N."/>
            <person name="De Strooper B."/>
            <person name="Scorrano L."/>
        </authorList>
    </citation>
    <scope>FUNCTION</scope>
    <scope>SUBUNIT</scope>
</reference>
<reference key="7">
    <citation type="journal article" date="2006" name="J. Biol. Chem.">
        <title>Proteolytic processing of OPA1 links mitochondrial dysfunction to alterations in mitochondrial morphology.</title>
        <authorList>
            <person name="Duvezin-Caubet S."/>
            <person name="Jagasia R."/>
            <person name="Wagener J."/>
            <person name="Hofmann S."/>
            <person name="Trifunovic A."/>
            <person name="Hansson A."/>
            <person name="Chomyn A."/>
            <person name="Bauer M.F."/>
            <person name="Attardi G."/>
            <person name="Larsson N.G."/>
            <person name="Neupert W."/>
            <person name="Reichert A.S."/>
        </authorList>
    </citation>
    <scope>PROTEOLYTIC CLEAVAGE</scope>
</reference>
<reference key="8">
    <citation type="journal article" date="2007" name="Brain">
        <title>A splice site mutation in the murine Opa1 gene features pathology of autosomal dominant optic atrophy.</title>
        <authorList>
            <person name="Alavi M.V."/>
            <person name="Bette S."/>
            <person name="Schimpf S."/>
            <person name="Schuettauf F."/>
            <person name="Schraermeyer U."/>
            <person name="Wehrl H.F."/>
            <person name="Ruttiger L."/>
            <person name="Beck S.C."/>
            <person name="Tonagel F."/>
            <person name="Pichler B.J."/>
            <person name="Knipper M."/>
            <person name="Peters T."/>
            <person name="Laufs J."/>
            <person name="Wissinger B."/>
        </authorList>
    </citation>
    <scope>DISRUPTION PHENOTYPE</scope>
</reference>
<reference key="9">
    <citation type="journal article" date="2007" name="Hum. Mol. Genet.">
        <title>Opa1 deficiency in a mouse model of autosomal dominant optic atrophy impairs mitochondrial morphology, optic nerve structure and visual function.</title>
        <authorList>
            <person name="Davies V.J."/>
            <person name="Hollins A.J."/>
            <person name="Piechota M.J."/>
            <person name="Yip W."/>
            <person name="Davies J.R."/>
            <person name="White K.E."/>
            <person name="Nicols P.P."/>
            <person name="Boulton M.E."/>
            <person name="Votruba M."/>
        </authorList>
    </citation>
    <scope>DISRUPTION PHENOTYPE</scope>
    <scope>MUTAGENESIS OF 285-GLN--LYS-960</scope>
</reference>
<reference key="10">
    <citation type="journal article" date="2009" name="J. Cell Biol.">
        <title>Regulation of OPA1 processing and mitochondrial fusion by m-AAA protease isoenzymes and OMA1.</title>
        <authorList>
            <person name="Ehses S."/>
            <person name="Raschke I."/>
            <person name="Mancuso G."/>
            <person name="Bernacchia A."/>
            <person name="Geimer S."/>
            <person name="Tondera D."/>
            <person name="Martinou J.C."/>
            <person name="Westermann B."/>
            <person name="Rugarli E.I."/>
            <person name="Langer T."/>
        </authorList>
    </citation>
    <scope>FUNCTION</scope>
    <scope>PROTEOLYTIC PROCESSING</scope>
    <scope>SUBCELLULAR LOCATION</scope>
</reference>
<reference key="11">
    <citation type="journal article" date="2010" name="Cell">
        <title>A tissue-specific atlas of mouse protein phosphorylation and expression.</title>
        <authorList>
            <person name="Huttlin E.L."/>
            <person name="Jedrychowski M.P."/>
            <person name="Elias J.E."/>
            <person name="Goswami T."/>
            <person name="Rad R."/>
            <person name="Beausoleil S.A."/>
            <person name="Villen J."/>
            <person name="Haas W."/>
            <person name="Sowa M.E."/>
            <person name="Gygi S.P."/>
        </authorList>
    </citation>
    <scope>IDENTIFICATION BY MASS SPECTROMETRY [LARGE SCALE ANALYSIS]</scope>
    <source>
        <tissue>Brain</tissue>
        <tissue>Brown adipose tissue</tissue>
        <tissue>Heart</tissue>
        <tissue>Kidney</tissue>
        <tissue>Liver</tissue>
        <tissue>Lung</tissue>
        <tissue>Pancreas</tissue>
        <tissue>Spleen</tissue>
        <tissue>Testis</tissue>
    </source>
</reference>
<reference key="12">
    <citation type="journal article" date="2011" name="J. Biol. Chem.">
        <title>ChChd3, an inner mitochondrial membrane protein, is essential for maintaining crista integrity and mitochondrial function.</title>
        <authorList>
            <person name="Darshi M."/>
            <person name="Mendiola V.L."/>
            <person name="Mackey M.R."/>
            <person name="Murphy A.N."/>
            <person name="Koller A."/>
            <person name="Perkins G.A."/>
            <person name="Ellisman M.H."/>
            <person name="Taylor S.S."/>
        </authorList>
    </citation>
    <scope>INTERACTION WITH CHCHD3 AND IMMT</scope>
    <scope>SUBCELLULAR LOCATION</scope>
</reference>
<reference key="13">
    <citation type="journal article" date="2012" name="EMBO J.">
        <title>Loss of mitochondrial protease OMA1 alters processing of the GTPase OPA1 and causes obesity and defective thermogenesis in mice.</title>
        <authorList>
            <person name="Quiros P.M."/>
            <person name="Ramsay A.J."/>
            <person name="Sala D."/>
            <person name="Fernandez-Vizarra E."/>
            <person name="Rodriguez F."/>
            <person name="Peinado J.R."/>
            <person name="Fernandez-Garcia M.S."/>
            <person name="Vega J.A."/>
            <person name="Enriquez J.A."/>
            <person name="Zorzano A."/>
            <person name="Lopez-Otin C."/>
        </authorList>
    </citation>
    <scope>FUNCTION</scope>
    <scope>PROTEOLYTIC PROCESSING</scope>
    <scope>SUBCELLULAR LOCATION</scope>
</reference>
<reference key="14">
    <citation type="journal article" date="2013" name="Cell">
        <title>Mitochondrial cristae shape determines respiratory chain supercomplexes assembly and respiratory efficiency.</title>
        <authorList>
            <person name="Cogliati S."/>
            <person name="Frezza C."/>
            <person name="Soriano M.E."/>
            <person name="Varanita T."/>
            <person name="Quintana-Cabrera R."/>
            <person name="Corrado M."/>
            <person name="Cipolat S."/>
            <person name="Costa V."/>
            <person name="Casarin A."/>
            <person name="Gomes L.C."/>
            <person name="Perales-Clemente E."/>
            <person name="Salviati L."/>
            <person name="Fernandez-Silva P."/>
            <person name="Enriquez J.A."/>
            <person name="Scorrano L."/>
        </authorList>
    </citation>
    <scope>FUNCTION</scope>
    <scope>DISRUPTION PHENOTYPE</scope>
</reference>
<reference key="15">
    <citation type="journal article" date="2014" name="Cell Metab.">
        <title>Proteolytic cleavage of Opa1 stimulates mitochondrial inner membrane fusion and couples fusion to oxidative phosphorylation.</title>
        <authorList>
            <person name="Mishra P."/>
            <person name="Carelli V."/>
            <person name="Manfredi G."/>
            <person name="Chan D.C."/>
        </authorList>
    </citation>
    <scope>FUNCTION</scope>
    <scope>PROTEOLYTIC CLEAVAGE</scope>
</reference>
<reference key="16">
    <citation type="journal article" date="2014" name="EMBO J.">
        <title>Stress-induced OMA1 activation and autocatalytic turnover regulate OPA1-dependent mitochondrial dynamics.</title>
        <authorList>
            <person name="Baker M.J."/>
            <person name="Lampe P.A."/>
            <person name="Stojanovski D."/>
            <person name="Korwitz A."/>
            <person name="Anand R."/>
            <person name="Tatsuta T."/>
            <person name="Langer T."/>
        </authorList>
    </citation>
    <scope>PROTEOLYTIC PROCESSING</scope>
</reference>
<reference key="17">
    <citation type="journal article" date="2014" name="EMBO J.">
        <title>OPA1-dependent cristae modulation is essential for cellular adaptation to metabolic demand.</title>
        <authorList>
            <person name="Patten D.A."/>
            <person name="Wong J."/>
            <person name="Khacho M."/>
            <person name="Soubannier V."/>
            <person name="Mailloux R.J."/>
            <person name="Pilon-Larose K."/>
            <person name="MacLaurin J.G."/>
            <person name="Park D.S."/>
            <person name="McBride H.M."/>
            <person name="Trinkle-Mulcahy L."/>
            <person name="Harper M.E."/>
            <person name="Germain M."/>
            <person name="Slack R.S."/>
        </authorList>
    </citation>
    <scope>FUNCTION</scope>
    <scope>MUTAGENESIS OF GLN-297</scope>
</reference>
<reference key="18">
    <citation type="journal article" date="2014" name="J. Biol. Chem.">
        <title>Transient contraction of mitochondria induces depolarization through the inner membrane dynamin OPA1 protein.</title>
        <authorList>
            <person name="Lee H."/>
            <person name="Yoon Y."/>
        </authorList>
    </citation>
    <scope>FUNCTION</scope>
</reference>
<reference key="19">
    <citation type="journal article" date="2014" name="J. Cell Biol.">
        <title>The i-AAA protease YME1L and OMA1 cleave OPA1 to balance mitochondrial fusion and fission.</title>
        <authorList>
            <person name="Anand R."/>
            <person name="Wai T."/>
            <person name="Baker M.J."/>
            <person name="Kladt N."/>
            <person name="Schauss A.C."/>
            <person name="Rugarli E."/>
            <person name="Langer T."/>
        </authorList>
    </citation>
    <scope>FUNCTION</scope>
    <scope>PROTEOLYTIC CLEAVAGE</scope>
</reference>
<reference key="20">
    <citation type="journal article" date="2015" name="Science">
        <title>Imbalanced OPA1 processing and mitochondrial fragmentation cause heart failure in mice.</title>
        <authorList>
            <person name="Wai T."/>
            <person name="Garcia-Prieto J."/>
            <person name="Baker M.J."/>
            <person name="Merkwirth C."/>
            <person name="Benit P."/>
            <person name="Rustin P."/>
            <person name="Ruperez F.J."/>
            <person name="Barbas C."/>
            <person name="Ibanez B."/>
            <person name="Langer T."/>
        </authorList>
    </citation>
    <scope>FUNCTION</scope>
    <scope>PROTEOLYTIC CLEAVAGE</scope>
</reference>
<reference key="21">
    <citation type="journal article" date="2017" name="Cell Rep.">
        <title>OPA1 Isoforms in the Hierarchical Organization of Mitochondrial Functions.</title>
        <authorList>
            <person name="Del Dotto V."/>
            <person name="Mishra P."/>
            <person name="Vidoni S."/>
            <person name="Fogazza M."/>
            <person name="Maresca A."/>
            <person name="Caporali L."/>
            <person name="McCaffery J.M."/>
            <person name="Cappelletti M."/>
            <person name="Baruffini E."/>
            <person name="Lenaers G."/>
            <person name="Chan D."/>
            <person name="Rugolo M."/>
            <person name="Carelli V."/>
            <person name="Zanna C."/>
        </authorList>
    </citation>
    <scope>FUNCTION</scope>
    <scope>CATALYTIC ACTIVITY</scope>
    <scope>PROTEOLYTIC CLEAVAGE</scope>
    <scope>MUTAGENESIS OF GLY-300</scope>
</reference>
<reference key="22">
    <citation type="journal article" date="2017" name="Cell Rep.">
        <title>WBSCR16 Is a Guanine Nucleotide Exchange Factor Important for Mitochondrial Fusion.</title>
        <authorList>
            <person name="Huang G."/>
            <person name="Massoudi D."/>
            <person name="Muir A.M."/>
            <person name="Joshi D.C."/>
            <person name="Zhang C.L."/>
            <person name="Chiu S.Y."/>
            <person name="Greenspan D.S."/>
        </authorList>
    </citation>
    <scope>SUBUNIT</scope>
    <scope>FUNCTION</scope>
    <scope>SUBCELLULAR LOCATION</scope>
</reference>
<reference key="23">
    <citation type="journal article" date="2020" name="EMBO J.">
        <title>Mitochondrial Safeguard: a stress response that offsets extreme fusion and protects respiratory function via flickering-induced Oma1 activation.</title>
        <authorList>
            <person name="Murata D."/>
            <person name="Yamada T."/>
            <person name="Tokuyama T."/>
            <person name="Arai K."/>
            <person name="Quiros P.M."/>
            <person name="Lopez-Otin C."/>
            <person name="Iijima M."/>
            <person name="Sesaki H."/>
        </authorList>
    </citation>
    <scope>FUNCTION</scope>
</reference>
<reference key="24">
    <citation type="journal article" date="2021" name="Mol. Biol. Cell">
        <title>Identification of new OPA1 cleavage site reveals that short isoforms regulate mitochondrial fusion.</title>
        <authorList>
            <person name="Wang R."/>
            <person name="Mishra P."/>
            <person name="Garbis S.D."/>
            <person name="Moradian A."/>
            <person name="Sweredoski M.J."/>
            <person name="Chan D.C."/>
        </authorList>
    </citation>
    <scope>FUNCTION</scope>
    <scope>PROTEOLYTIC CLEAVAGE</scope>
</reference>
<reference key="25">
    <citation type="journal article" date="2022" name="Nature">
        <title>An LKB1-mitochondria axis controls TH17 effector function.</title>
        <authorList>
            <person name="Baixauli F."/>
            <person name="Piletic K."/>
            <person name="Puleston D.J."/>
            <person name="Villa M."/>
            <person name="Field C.S."/>
            <person name="Flachsmann L.J."/>
            <person name="Quintana A."/>
            <person name="Rana N."/>
            <person name="Edwards-Hicks J."/>
            <person name="Matsushita M."/>
            <person name="Stanczak M.A."/>
            <person name="Grzes K.M."/>
            <person name="Kabat A.M."/>
            <person name="Fabri M."/>
            <person name="Caputa G."/>
            <person name="Kelly B."/>
            <person name="Corrado M."/>
            <person name="Musa Y."/>
            <person name="Duda K.J."/>
            <person name="Mittler G."/>
            <person name="O'Sullivan D."/>
            <person name="Sesaki H."/>
            <person name="Jenuwein T."/>
            <person name="Buescher J.M."/>
            <person name="Pearce E.J."/>
            <person name="Sanin D.E."/>
            <person name="Pearce E.L."/>
        </authorList>
    </citation>
    <scope>FUNCTION</scope>
</reference>
<reference key="26">
    <citation type="journal article" date="2024" name="EMBO J.">
        <title>In situ architecture of Opa1-dependent mitochondrial cristae remodeling.</title>
        <authorList>
            <person name="Fry M.Y."/>
            <person name="Navarro P.P."/>
            <person name="Hakim P."/>
            <person name="Ananda V.Y."/>
            <person name="Qin X."/>
            <person name="Landoni J.C."/>
            <person name="Rath S."/>
            <person name="Inde Z."/>
            <person name="Lugo C.M."/>
            <person name="Luce B.E."/>
            <person name="Ge Y."/>
            <person name="McDonald J.L."/>
            <person name="Ali I."/>
            <person name="Ha L.L."/>
            <person name="Kleinstiver B.P."/>
            <person name="Chan D.C."/>
            <person name="Sarosiek K.A."/>
            <person name="Chao L.H."/>
        </authorList>
    </citation>
    <scope>FUNCTION</scope>
</reference>
<comment type="function">
    <text evidence="2 6 7 8 15 17 18 19 20 21 22 23 24 25 26 27">Dynamin-related GTPase that is essential for normal mitochondrial morphology by mediating fusion of the mitochondrial inner membranes, regulating cristae morphology and maintaining respiratory chain function (PubMed:11847212, PubMed:16839884, PubMed:16839885, PubMed:24055366, PubMed:24616225, PubMed:24627489, PubMed:25298396, PubMed:26785494, PubMed:28636943, PubMed:28746876, PubMed:33200421, PubMed:33237841, PubMed:36171294, PubMed:38225406). Exists in two forms: the transmembrane, long form (Dynamin-like GTPase OPA1, long form; L-OPA1), which is tethered to the inner mitochondrial membrane, and the short soluble form (Dynamin-like GTPase OPA1, short form; S-OPA1), which results from proteolytic cleavage and localizes in the intermembrane space (PubMed:24703695, PubMed:28636943, PubMed:33237841). Both forms (L-OPA1 and S-OPA1) cooperate to catalyze the fusion of the mitochondrial inner membrane (PubMed:33237841). The equilibrium between L-OPA1 and S-OPA1 is essential: excess levels of S-OPA1, produced by cleavage by OMA1 following loss of mitochondrial membrane potential, lead to an impaired equilibrium between L-OPA1 and S-OPA1, inhibiting mitochondrial fusion (PubMed:33200421). The balance between L-OPA1 and S-OPA1 also influences cristae shape and morphology (PubMed:33200421, PubMed:38225406). Involved in remodeling cristae and the release of cytochrome c during apoptosis (PubMed:16839884). Proteolytic processing by PARL in response to intrinsic apoptotic signals may lead to disassembly of OPA1 oligomers and release of the caspase activator cytochrome C (CYCS) into the mitochondrial intermembrane space (PubMed:16839884, PubMed:16839885). Acts as a regulator of T-helper Th17 cells, which are characterized by cells with fused mitochondria with tight cristae, by mediating mitochondrial membrane remodeling: OPA1 is required for interleukin-17 (IL-17) production (PubMed:36171294). Its role in mitochondrial morphology is required for mitochondrial genome maintenance (By similarity).</text>
</comment>
<comment type="function">
    <molecule>Dynamin-like GTPase OPA1, long form</molecule>
    <text evidence="1 2 7 8 12 14 20 27">Constitutes the transmembrane long form (L-OPA1) that plays a central role in mitochondrial inner membrane fusion and cristae morphology (PubMed:20038678, PubMed:22433842, PubMed:25298396). L-OPA1 and the soluble short form (S-OPA1) form higher-order helical assemblies that coordinate the fusion of mitochondrial inner membranes (By similarity). Inner membrane-anchored L-OPA1 molecules initiate membrane remodeling by recruiting soluble S-OPA1 to rapidly polymerize into a flexible cylindrical scaffold encaging the mitochondrial inner membrane (By similarity). Once at the membrane surface, the formation of S-OPA1 helices induce bilayer curvature (By similarity). OPA1 dimerization through the paddle region, which inserts into cardiolipin-containing membrane, promotes GTP hydrolysis and the helical assembly of a flexible OPA1 lattice on the membrane, which drives membrane curvature and mitochondrial fusion (By similarity). Plays a role in the maintenance and remodeling of mitochondrial cristae, some invaginations of the mitochondrial inner membrane that provide an increase in the surface area (PubMed:16839884, PubMed:16839885, PubMed:25298396, PubMed:38225406). Probably acts by forming helical filaments at the inside of inner membrane tubes with the shape and dimensions of crista junctions (By similarity). The equilibrium between L-OPA1 and S-OPA1 influences cristae shape and morphology: increased L-OPA1 levels promote cristae stacking and elongated mitochondria, while increased S-OPA1 levels correlated with irregular cristae packing and round mitochondria shape (PubMed:38225406).</text>
</comment>
<comment type="function">
    <molecule>Dynamin-like GTPase OPA1, short form</molecule>
    <text evidence="1 2 7 8 12 14 18 20 24 27">Constitutes the soluble short form (S-OPA1) generated by cleavage by OMA1, which plays a central role in mitochondrial inner membrane fusion and cristae morphology (PubMed:20038678, PubMed:22433842, PubMed:25298396). The transmembrane long form (L-OPA1) and the S-OPA1 form higher-order helical assemblies that coordinate the fusion of mitochondrial inner membranes (By similarity). Inner membrane-anchored L-OPA1 molecules initiate membrane remodeling by recruiting soluble S-OPA1 to rapidly polymerize into a flexible cylindrical scaffold encaging the mitochondrial inner membrane (By similarity). Once at the membrane surface, the formation of S-OPA1 helices induce bilayer curvature (By similarity). OPA1 dimerization through the paddle region, which inserts into cardiolipin-containing membrane, promotes GTP hydrolysis and the helical assembly of a flexible OPA1 lattice on the membrane, which drives membrane curvature and mitochondrial fusion (By similarity). Excess levels of S-OPA1 produced by cleavage by OMA1 following stress conditions that induce loss of mitochondrial membrane potential, lead to an impaired equilibrium between L-OPA1 and S-OPA1, thereby inhibiting mitochondrial fusion (PubMed:20038678, PubMed:22433842). Involved in mitochondrial safeguard in response to transient mitochondrial membrane depolarization by mediating flickering: cleavage by OMA1 leads to excess production of S-OPA1, preventing mitochondrial hyperfusion (PubMed:24627489, PubMed:33200421). Plays a role in the maintenance and remodeling of mitochondrial cristae, some invaginations of the mitochondrial inner membrane that provide an increase in the surface area (PubMed:16839884, PubMed:16839885, PubMed:25298396, PubMed:38225406). Probably acts by forming helical filaments at the inside of inner membrane tubes with the shape and dimensions of crista junctions (By similarity). The equilibrium between L-OPA1 and S-OPA1 influences cristae shape and morphology: increased L-OPA1 levels promote cristae stacking and elongated mitochondria, while increased S-OPA1 levels correlated with irregular cristae packing and round mitochondria shape (PubMed:38225406).</text>
</comment>
<comment type="function">
    <molecule>Isoform 2</molecule>
    <text evidence="2">Isoforms that contain the alternative exon 4b are required for mitochondrial genome maintenance, possibly by anchoring the mitochondrial nucleoids to the inner mitochondrial membrane.</text>
</comment>
<comment type="catalytic activity">
    <reaction evidence="22">
        <text>GTP + H2O = GDP + phosphate + H(+)</text>
        <dbReference type="Rhea" id="RHEA:19669"/>
        <dbReference type="ChEBI" id="CHEBI:15377"/>
        <dbReference type="ChEBI" id="CHEBI:15378"/>
        <dbReference type="ChEBI" id="CHEBI:37565"/>
        <dbReference type="ChEBI" id="CHEBI:43474"/>
        <dbReference type="ChEBI" id="CHEBI:58189"/>
        <dbReference type="EC" id="3.6.5.5"/>
    </reaction>
</comment>
<comment type="activity regulation">
    <text evidence="2">Activated by guanine nucleotide exchange factor RCC1L.</text>
</comment>
<comment type="subunit">
    <text evidence="2 8 13 23">Oligomeric complex consisting of membrane-bound and soluble forms of OPA1 (PubMed:16839885). Interacts with RCC1L; RCC1L acts as a guanine nucleotide exchange factor (GEF) for OPA1 by exchanging bound GDP for free GTP (PubMed:28746876). Interacts with CHCHD3 and IMMT; these interactions occur preferentially with soluble OPA1 forms (PubMed:21081504). Interacts with PRELID1 (By similarity).</text>
</comment>
<comment type="subcellular location">
    <molecule>Dynamin-like GTPase OPA1, long form</molecule>
    <subcellularLocation>
        <location evidence="6 7 13 23">Mitochondrion inner membrane</location>
        <topology evidence="4">Single-pass membrane protein</topology>
    </subcellularLocation>
    <text evidence="2">Detected at contact sites between endoplasmic reticulum and mitochondrion membranes.</text>
</comment>
<comment type="subcellular location">
    <molecule>Dynamin-like GTPase OPA1, short form</molecule>
    <subcellularLocation>
        <location evidence="12 14">Mitochondrion intermembrane space</location>
    </subcellularLocation>
</comment>
<comment type="alternative products">
    <event type="alternative splicing"/>
    <isoform>
        <id>P58281-1</id>
        <name>1</name>
        <sequence type="displayed"/>
    </isoform>
    <isoform>
        <id>P58281-2</id>
        <name>2</name>
        <sequence type="described" ref="VSP_021037"/>
    </isoform>
    <isoform>
        <id>P58281-3</id>
        <name>3</name>
        <sequence type="described" ref="VSP_062329"/>
    </isoform>
</comment>
<comment type="tissue specificity">
    <text evidence="6">Detected in brain (at protein level) (PubMed:11847212). Detected in brain, brain stem, heart, kidney, liver and skeletal muscle (PubMed:11847212).</text>
</comment>
<comment type="domain">
    <text evidence="2">The paddle region plays a major role in driving mitochondrial inner membrane fusion. It binds lipid membranes enriched in negatively charged phospholipids, such as cardiolipin, and promotes membrane tubulation. A conserved intramembrane region, named membrane insertion loop (MIL), within the paddle region inserts deeply into the bilayer, further stabilizing the interactions with cardiolipin-enriched membranes. OPA1 dimerization through the paddle domain promotes the helical assembly of a flexible OPA1 lattice on the membrane, driving mitochondrial fusion in cells.</text>
</comment>
<comment type="PTM">
    <text evidence="7 9 12 14 16 17 19 21 22 24 25">Cleaved by OMA1 or YME1L downstream of the transmembrane region in response to different signals to generate soluble forms (PubMed:17003040, PubMed:20038678, PubMed:22433842, PubMed:24550258, PubMed:24616225, PubMed:24703695, PubMed:26785494, PubMed:28636943, PubMed:33200421, PubMed:33237841). Cleaved by OMA1 at position S1 following stress conditions, generating the short soluble form (Dynamin-like GTPase OPA1, short form; S-OPA1) (PubMed:17003040, PubMed:20038678, PubMed:22433842, PubMed:24550258, PubMed:33200421). AFG3L2 is involved in the regulation of OMA1-dependent processing of OPA1 (PubMed:20038678). PARL-dependent proteolytic processing releases an antiapoptotic soluble form not required for mitochondrial fusion (PubMed:16839884).</text>
</comment>
<comment type="PTM">
    <molecule>Isoform 2</molecule>
    <text evidence="3 17 19 21">Cleavage at position S2 by YME1L is required to mediate oxidative phosphorylation (OXPHOS)-induced mitochondrial fusion (PubMed:24616225, PubMed:24703695, PubMed:26785494). Cleavage occurs in the sequence motif Leu-Gln-Gln-Gln-Ile-Gln (LQQQIQ) (By similarity).</text>
</comment>
<comment type="PTM">
    <molecule>Isoform 3</molecule>
    <text evidence="25">Cleavage at position S3 by YME1L is required for membrane tubulation.</text>
</comment>
<comment type="disruption phenotype">
    <text evidence="10 11 15">Embryonic lethality at 9 days post coitum (dpc) (PubMed:17314202, PubMed:17428816). Heterozygous mice are viable but exhibit an age-dependent loss of retinal ganglion cells that eventually progresses to a severe degeneration of the ganglion cell and nerve fiber layer (PubMed:17314202, PubMed:17428816). Conditional deletion alters cristae shape and respiratory chain supercomplex (RCS) assembly (PubMed:24055366).</text>
</comment>
<comment type="similarity">
    <text evidence="5">Belongs to the TRAFAC class dynamin-like GTPase superfamily. Dynamin/Fzo/YdjA family.</text>
</comment>
<comment type="sequence caution" evidence="32">
    <conflict type="erroneous initiation">
        <sequence resource="EMBL-CDS" id="AAH25160"/>
    </conflict>
</comment>
<sequence>MWRAGRAAVACEVCQSLVKHSSGIQRNVPLQKLHLVSRSIYRSHHPALKLQRPQLRTPFQQFSSLTHLSLHKLKLSPIKYGYQPRRNFWPARLAARLLKLRYIILGSAVGGGYTAKKTFDEWKDMIPDLSDYKWIVPDFIWEIDEYIDLEKIRKALPSSEDLASLAPDLDKITESLSLLKDFFTAGSPGETAFRATDHGSESDKHYRKVSDKEKIDQLQEELLHTQLKYQRILERLEKENKELRKLVLQKDDKGIHHRKLKKSLIDMYSEVLDVLSDYDASYNTQDHLPRVVVVGDQSAGKTSVLEMIAQARIFPRGSGEMMTRSPVKVTLSEGPHHVALFKDSSREFDLTKEEDLAALRHEIELRMRKNVKEGCTVSPETISLNVKGPGLQRMVLVDLPGVINTVTSGMAPDTKETIFSISKAYMQNPNAIILCIQDGSVDAERSIVTDLVSQMDPHGRRTIFVLTKVDLAEKNVASPSRIQQIIEGKLFPMKALGYFAVVTGKGNSSESIEAIREYEEEFFQNSKLLKTSMLKAHQVTTRNLSLAVSDCFWKMVRESVEQQADSFKATRFNLETEWKNNYPRLRELDRNELFEKAKNEILDEVISLSQVTPKHWEEILQQSLWERVSTHVIENIYLPAAQTMNSGTFNTTVDIKLKQWTDKQLPNKAVEVAWETLQEEFSRFMTEPKGKEHDDIFDKLKEAVKEESIKRHKWNDFAEDSLRVIQHNALEDRSISDKQQWDAAIYFMEEALQGRLKDTENAIENMIGPDWKKRWMYWKNRTQEQCVHNETKNELEKMLKVNDEHPAYLASDEITTVRKNLESRGVEVDPSLIKDTWHQVYRRHFLKTALNHCNLCRRGFYYYQRHFIDSELECNDVVLFWRIQRMLAITANTLRQQLTNTEVRRLEKNVKEVLEDFAEDGEKKVKLLTGKRVQLAEDLKKVREIQEKLDAFIEALHQEK</sequence>
<protein>
    <recommendedName>
        <fullName>Dynamin-like GTPase OPA1, mitochondrial</fullName>
        <ecNumber evidence="22">3.6.5.5</ecNumber>
    </recommendedName>
    <alternativeName>
        <fullName evidence="28">Large GTP-binding protein</fullName>
        <shortName evidence="28">LargeG</shortName>
    </alternativeName>
    <alternativeName>
        <fullName>Optic atrophy protein 1 homolog</fullName>
    </alternativeName>
    <component>
        <recommendedName>
            <fullName evidence="32">Dynamin-like GTPase OPA1, long form</fullName>
            <shortName evidence="31">L-OPA1</shortName>
        </recommendedName>
    </component>
    <component>
        <recommendedName>
            <fullName>Dynamin-like GTPase OPA1, short form</fullName>
            <shortName evidence="31">S-OPA1</shortName>
        </recommendedName>
    </component>
</protein>
<evidence type="ECO:0000250" key="1">
    <source>
        <dbReference type="UniProtKB" id="G0SGC7"/>
    </source>
</evidence>
<evidence type="ECO:0000250" key="2">
    <source>
        <dbReference type="UniProtKB" id="O60313"/>
    </source>
</evidence>
<evidence type="ECO:0000250" key="3">
    <source>
        <dbReference type="UniProtKB" id="Q2TA68"/>
    </source>
</evidence>
<evidence type="ECO:0000255" key="4"/>
<evidence type="ECO:0000255" key="5">
    <source>
        <dbReference type="PROSITE-ProRule" id="PRU01055"/>
    </source>
</evidence>
<evidence type="ECO:0000269" key="6">
    <source>
    </source>
</evidence>
<evidence type="ECO:0000269" key="7">
    <source>
    </source>
</evidence>
<evidence type="ECO:0000269" key="8">
    <source>
    </source>
</evidence>
<evidence type="ECO:0000269" key="9">
    <source>
    </source>
</evidence>
<evidence type="ECO:0000269" key="10">
    <source>
    </source>
</evidence>
<evidence type="ECO:0000269" key="11">
    <source>
    </source>
</evidence>
<evidence type="ECO:0000269" key="12">
    <source>
    </source>
</evidence>
<evidence type="ECO:0000269" key="13">
    <source>
    </source>
</evidence>
<evidence type="ECO:0000269" key="14">
    <source>
    </source>
</evidence>
<evidence type="ECO:0000269" key="15">
    <source>
    </source>
</evidence>
<evidence type="ECO:0000269" key="16">
    <source>
    </source>
</evidence>
<evidence type="ECO:0000269" key="17">
    <source>
    </source>
</evidence>
<evidence type="ECO:0000269" key="18">
    <source>
    </source>
</evidence>
<evidence type="ECO:0000269" key="19">
    <source>
    </source>
</evidence>
<evidence type="ECO:0000269" key="20">
    <source>
    </source>
</evidence>
<evidence type="ECO:0000269" key="21">
    <source>
    </source>
</evidence>
<evidence type="ECO:0000269" key="22">
    <source>
    </source>
</evidence>
<evidence type="ECO:0000269" key="23">
    <source>
    </source>
</evidence>
<evidence type="ECO:0000269" key="24">
    <source>
    </source>
</evidence>
<evidence type="ECO:0000269" key="25">
    <source>
    </source>
</evidence>
<evidence type="ECO:0000269" key="26">
    <source>
    </source>
</evidence>
<evidence type="ECO:0000269" key="27">
    <source>
    </source>
</evidence>
<evidence type="ECO:0000303" key="28">
    <source>
    </source>
</evidence>
<evidence type="ECO:0000303" key="29">
    <source>
    </source>
</evidence>
<evidence type="ECO:0000303" key="30">
    <source>
    </source>
</evidence>
<evidence type="ECO:0000303" key="31">
    <source>
    </source>
</evidence>
<evidence type="ECO:0000305" key="32"/>
<evidence type="ECO:0000305" key="33">
    <source>
    </source>
</evidence>
<evidence type="ECO:0000312" key="34">
    <source>
        <dbReference type="MGI" id="MGI:1921393"/>
    </source>
</evidence>
<proteinExistence type="evidence at protein level"/>
<dbReference type="EC" id="3.6.5.5" evidence="22"/>
<dbReference type="EMBL" id="AB044138">
    <property type="protein sequence ID" value="BAB59000.1"/>
    <property type="molecule type" value="mRNA"/>
</dbReference>
<dbReference type="EMBL" id="AK029157">
    <property type="protein sequence ID" value="BAC26331.1"/>
    <property type="molecule type" value="mRNA"/>
</dbReference>
<dbReference type="EMBL" id="AK038446">
    <property type="protein sequence ID" value="BAC30002.1"/>
    <property type="molecule type" value="mRNA"/>
</dbReference>
<dbReference type="EMBL" id="AK044657">
    <property type="protein sequence ID" value="BAC32021.1"/>
    <property type="molecule type" value="mRNA"/>
</dbReference>
<dbReference type="EMBL" id="AK050383">
    <property type="protein sequence ID" value="BAC34224.1"/>
    <property type="molecule type" value="mRNA"/>
</dbReference>
<dbReference type="EMBL" id="AK145620">
    <property type="protein sequence ID" value="BAE26544.1"/>
    <property type="molecule type" value="mRNA"/>
</dbReference>
<dbReference type="EMBL" id="BC025160">
    <property type="protein sequence ID" value="AAH25160.1"/>
    <property type="status" value="ALT_INIT"/>
    <property type="molecule type" value="mRNA"/>
</dbReference>
<dbReference type="EMBL" id="BC138665">
    <property type="protein sequence ID" value="AAI38666.1"/>
    <property type="molecule type" value="mRNA"/>
</dbReference>
<dbReference type="EMBL" id="BC145959">
    <property type="protein sequence ID" value="AAI45960.1"/>
    <property type="molecule type" value="mRNA"/>
</dbReference>
<dbReference type="CCDS" id="CCDS28096.1">
    <molecule id="P58281-1"/>
</dbReference>
<dbReference type="CCDS" id="CCDS57024.1">
    <molecule id="P58281-3"/>
</dbReference>
<dbReference type="RefSeq" id="NP_001186106.1">
    <molecule id="P58281-3"/>
    <property type="nucleotide sequence ID" value="NM_001199177.2"/>
</dbReference>
<dbReference type="RefSeq" id="NP_001390100.1">
    <molecule id="P58281-2"/>
    <property type="nucleotide sequence ID" value="NM_001403171.1"/>
</dbReference>
<dbReference type="RefSeq" id="NP_001390101.1">
    <molecule id="P58281-2"/>
    <property type="nucleotide sequence ID" value="NM_001403172.1"/>
</dbReference>
<dbReference type="RefSeq" id="NP_001390111.1">
    <molecule id="P58281-1"/>
    <property type="nucleotide sequence ID" value="NM_001403182.1"/>
</dbReference>
<dbReference type="RefSeq" id="NP_598513.1">
    <molecule id="P58281-1"/>
    <property type="nucleotide sequence ID" value="NM_133752.4"/>
</dbReference>
<dbReference type="RefSeq" id="XP_006522720.1">
    <property type="nucleotide sequence ID" value="XM_006522657.2"/>
</dbReference>
<dbReference type="SMR" id="P58281"/>
<dbReference type="BioGRID" id="216522">
    <property type="interactions" value="19"/>
</dbReference>
<dbReference type="FunCoup" id="P58281">
    <property type="interactions" value="3615"/>
</dbReference>
<dbReference type="IntAct" id="P58281">
    <property type="interactions" value="17"/>
</dbReference>
<dbReference type="MINT" id="P58281"/>
<dbReference type="STRING" id="10090.ENSMUSP00000036993"/>
<dbReference type="GlyGen" id="P58281">
    <property type="glycosylation" value="1 site, 1 O-linked glycan (1 site)"/>
</dbReference>
<dbReference type="iPTMnet" id="P58281"/>
<dbReference type="PhosphoSitePlus" id="P58281"/>
<dbReference type="SwissPalm" id="P58281"/>
<dbReference type="jPOST" id="P58281"/>
<dbReference type="PaxDb" id="10090-ENSMUSP00000124223"/>
<dbReference type="PeptideAtlas" id="P58281"/>
<dbReference type="ProteomicsDB" id="294077">
    <molecule id="P58281-1"/>
</dbReference>
<dbReference type="ProteomicsDB" id="294078">
    <molecule id="P58281-2"/>
</dbReference>
<dbReference type="ProteomicsDB" id="312088"/>
<dbReference type="Pumba" id="P58281"/>
<dbReference type="Antibodypedia" id="33885">
    <property type="antibodies" value="318 antibodies from 33 providers"/>
</dbReference>
<dbReference type="Ensembl" id="ENSMUST00000038867.13">
    <molecule id="P58281-3"/>
    <property type="protein sequence ID" value="ENSMUSP00000036993.7"/>
    <property type="gene ID" value="ENSMUSG00000038084.17"/>
</dbReference>
<dbReference type="Ensembl" id="ENSMUST00000160597.8">
    <molecule id="P58281-1"/>
    <property type="protein sequence ID" value="ENSMUSP00000124223.2"/>
    <property type="gene ID" value="ENSMUSG00000038084.17"/>
</dbReference>
<dbReference type="Ensembl" id="ENSMUST00000161186.8">
    <molecule id="P58281-2"/>
    <property type="protein sequence ID" value="ENSMUSP00000123880.2"/>
    <property type="gene ID" value="ENSMUSG00000038084.17"/>
</dbReference>
<dbReference type="GeneID" id="74143"/>
<dbReference type="KEGG" id="mmu:74143"/>
<dbReference type="UCSC" id="uc007ywf.2">
    <molecule id="P58281-1"/>
    <property type="organism name" value="mouse"/>
</dbReference>
<dbReference type="AGR" id="MGI:1921393"/>
<dbReference type="CTD" id="4976"/>
<dbReference type="MGI" id="MGI:1921393">
    <property type="gene designation" value="Opa1"/>
</dbReference>
<dbReference type="VEuPathDB" id="HostDB:ENSMUSG00000038084"/>
<dbReference type="eggNOG" id="KOG0447">
    <property type="taxonomic scope" value="Eukaryota"/>
</dbReference>
<dbReference type="GeneTree" id="ENSGT00550000074851"/>
<dbReference type="HOGENOM" id="CLU_012302_0_0_1"/>
<dbReference type="InParanoid" id="P58281"/>
<dbReference type="OMA" id="PYHIACF"/>
<dbReference type="PhylomeDB" id="P58281"/>
<dbReference type="TreeFam" id="TF314250"/>
<dbReference type="BRENDA" id="3.6.5.5">
    <property type="organism ID" value="3474"/>
</dbReference>
<dbReference type="Reactome" id="R-MMU-169911">
    <property type="pathway name" value="Regulation of Apoptosis"/>
</dbReference>
<dbReference type="BioGRID-ORCS" id="74143">
    <property type="hits" value="16 hits in 77 CRISPR screens"/>
</dbReference>
<dbReference type="CD-CODE" id="CE726F99">
    <property type="entry name" value="Postsynaptic density"/>
</dbReference>
<dbReference type="ChiTaRS" id="Opa1">
    <property type="organism name" value="mouse"/>
</dbReference>
<dbReference type="PRO" id="PR:P58281"/>
<dbReference type="Proteomes" id="UP000000589">
    <property type="component" value="Chromosome 16"/>
</dbReference>
<dbReference type="RNAct" id="P58281">
    <property type="molecule type" value="protein"/>
</dbReference>
<dbReference type="Bgee" id="ENSMUSG00000038084">
    <property type="expression patterns" value="Expressed in dorsal striatum and 244 other cell types or tissues"/>
</dbReference>
<dbReference type="ExpressionAtlas" id="P58281">
    <property type="expression patterns" value="baseline and differential"/>
</dbReference>
<dbReference type="GO" id="GO:0005829">
    <property type="term" value="C:cytosol"/>
    <property type="evidence" value="ECO:0007669"/>
    <property type="project" value="Ensembl"/>
</dbReference>
<dbReference type="GO" id="GO:0030425">
    <property type="term" value="C:dendrite"/>
    <property type="evidence" value="ECO:0000314"/>
    <property type="project" value="UniProtKB"/>
</dbReference>
<dbReference type="GO" id="GO:0030061">
    <property type="term" value="C:mitochondrial crista"/>
    <property type="evidence" value="ECO:0000250"/>
    <property type="project" value="UniProtKB"/>
</dbReference>
<dbReference type="GO" id="GO:0005743">
    <property type="term" value="C:mitochondrial inner membrane"/>
    <property type="evidence" value="ECO:0000314"/>
    <property type="project" value="UniProtKB"/>
</dbReference>
<dbReference type="GO" id="GO:0005758">
    <property type="term" value="C:mitochondrial intermembrane space"/>
    <property type="evidence" value="ECO:0000314"/>
    <property type="project" value="UniProtKB"/>
</dbReference>
<dbReference type="GO" id="GO:0005741">
    <property type="term" value="C:mitochondrial outer membrane"/>
    <property type="evidence" value="ECO:0000250"/>
    <property type="project" value="UniProtKB"/>
</dbReference>
<dbReference type="GO" id="GO:0005739">
    <property type="term" value="C:mitochondrion"/>
    <property type="evidence" value="ECO:0000314"/>
    <property type="project" value="MGI"/>
</dbReference>
<dbReference type="GO" id="GO:0005654">
    <property type="term" value="C:nucleoplasm"/>
    <property type="evidence" value="ECO:0007669"/>
    <property type="project" value="Ensembl"/>
</dbReference>
<dbReference type="GO" id="GO:1901612">
    <property type="term" value="F:cardiolipin binding"/>
    <property type="evidence" value="ECO:0000250"/>
    <property type="project" value="UniProtKB"/>
</dbReference>
<dbReference type="GO" id="GO:0005525">
    <property type="term" value="F:GTP binding"/>
    <property type="evidence" value="ECO:0007669"/>
    <property type="project" value="UniProtKB-KW"/>
</dbReference>
<dbReference type="GO" id="GO:0003924">
    <property type="term" value="F:GTPase activity"/>
    <property type="evidence" value="ECO:0000250"/>
    <property type="project" value="UniProtKB"/>
</dbReference>
<dbReference type="GO" id="GO:0140523">
    <property type="term" value="F:GTPase-dependent fusogenic activity"/>
    <property type="evidence" value="ECO:0000314"/>
    <property type="project" value="UniProtKB"/>
</dbReference>
<dbReference type="GO" id="GO:0180020">
    <property type="term" value="F:membrane bending activity"/>
    <property type="evidence" value="ECO:0000250"/>
    <property type="project" value="UniProtKB"/>
</dbReference>
<dbReference type="GO" id="GO:0046872">
    <property type="term" value="F:metal ion binding"/>
    <property type="evidence" value="ECO:0007669"/>
    <property type="project" value="UniProtKB-KW"/>
</dbReference>
<dbReference type="GO" id="GO:0070300">
    <property type="term" value="F:phosphatidic acid binding"/>
    <property type="evidence" value="ECO:0000250"/>
    <property type="project" value="UniProtKB"/>
</dbReference>
<dbReference type="GO" id="GO:0006915">
    <property type="term" value="P:apoptotic process"/>
    <property type="evidence" value="ECO:0007669"/>
    <property type="project" value="UniProtKB-KW"/>
</dbReference>
<dbReference type="GO" id="GO:0090398">
    <property type="term" value="P:cellular senescence"/>
    <property type="evidence" value="ECO:0007669"/>
    <property type="project" value="Ensembl"/>
</dbReference>
<dbReference type="GO" id="GO:0042407">
    <property type="term" value="P:cristae formation"/>
    <property type="evidence" value="ECO:0000314"/>
    <property type="project" value="UniProtKB"/>
</dbReference>
<dbReference type="GO" id="GO:0046039">
    <property type="term" value="P:GTP metabolic process"/>
    <property type="evidence" value="ECO:0000250"/>
    <property type="project" value="UniProtKB"/>
</dbReference>
<dbReference type="GO" id="GO:0007007">
    <property type="term" value="P:inner mitochondrial membrane organization"/>
    <property type="evidence" value="ECO:0000314"/>
    <property type="project" value="UniProtKB"/>
</dbReference>
<dbReference type="GO" id="GO:0097749">
    <property type="term" value="P:membrane tubulation"/>
    <property type="evidence" value="ECO:0000250"/>
    <property type="project" value="UniProtKB"/>
</dbReference>
<dbReference type="GO" id="GO:0008053">
    <property type="term" value="P:mitochondrial fusion"/>
    <property type="evidence" value="ECO:0000314"/>
    <property type="project" value="MGI"/>
</dbReference>
<dbReference type="GO" id="GO:0000002">
    <property type="term" value="P:mitochondrial genome maintenance"/>
    <property type="evidence" value="ECO:0000250"/>
    <property type="project" value="UniProtKB"/>
</dbReference>
<dbReference type="GO" id="GO:1990627">
    <property type="term" value="P:mitochondrial inner membrane fusion"/>
    <property type="evidence" value="ECO:0000314"/>
    <property type="project" value="UniProtKB"/>
</dbReference>
<dbReference type="GO" id="GO:0007005">
    <property type="term" value="P:mitochondrion organization"/>
    <property type="evidence" value="ECO:0000314"/>
    <property type="project" value="MGI"/>
</dbReference>
<dbReference type="GO" id="GO:0043066">
    <property type="term" value="P:negative regulation of apoptotic process"/>
    <property type="evidence" value="ECO:0000250"/>
    <property type="project" value="UniProtKB"/>
</dbReference>
<dbReference type="GO" id="GO:1902236">
    <property type="term" value="P:negative regulation of endoplasmic reticulum stress-induced intrinsic apoptotic signaling pathway"/>
    <property type="evidence" value="ECO:0000315"/>
    <property type="project" value="ParkinsonsUK-UCL"/>
</dbReference>
<dbReference type="GO" id="GO:2001243">
    <property type="term" value="P:negative regulation of intrinsic apoptotic signaling pathway"/>
    <property type="evidence" value="ECO:0000315"/>
    <property type="project" value="UniProtKB"/>
</dbReference>
<dbReference type="GO" id="GO:0090201">
    <property type="term" value="P:negative regulation of release of cytochrome c from mitochondria"/>
    <property type="evidence" value="ECO:0000315"/>
    <property type="project" value="UniProtKB"/>
</dbReference>
<dbReference type="GO" id="GO:0001843">
    <property type="term" value="P:neural tube closure"/>
    <property type="evidence" value="ECO:0000315"/>
    <property type="project" value="MGI"/>
</dbReference>
<dbReference type="GO" id="GO:0032740">
    <property type="term" value="P:positive regulation of interleukin-17 production"/>
    <property type="evidence" value="ECO:0000315"/>
    <property type="project" value="UniProtKB"/>
</dbReference>
<dbReference type="GO" id="GO:2000330">
    <property type="term" value="P:positive regulation of T-helper 17 cell lineage commitment"/>
    <property type="evidence" value="ECO:0000315"/>
    <property type="project" value="UniProtKB"/>
</dbReference>
<dbReference type="GO" id="GO:0051259">
    <property type="term" value="P:protein complex oligomerization"/>
    <property type="evidence" value="ECO:0007669"/>
    <property type="project" value="Ensembl"/>
</dbReference>
<dbReference type="GO" id="GO:0007601">
    <property type="term" value="P:visual perception"/>
    <property type="evidence" value="ECO:0000250"/>
    <property type="project" value="UniProtKB"/>
</dbReference>
<dbReference type="CDD" id="cd08771">
    <property type="entry name" value="DLP_1"/>
    <property type="match status" value="1"/>
</dbReference>
<dbReference type="FunFam" id="3.40.50.300:FF:000171">
    <property type="entry name" value="Dynamin-like 120 kDa protein, mitochondrial"/>
    <property type="match status" value="1"/>
</dbReference>
<dbReference type="Gene3D" id="3.40.50.300">
    <property type="entry name" value="P-loop containing nucleotide triphosphate hydrolases"/>
    <property type="match status" value="1"/>
</dbReference>
<dbReference type="InterPro" id="IPR022812">
    <property type="entry name" value="Dynamin"/>
</dbReference>
<dbReference type="InterPro" id="IPR001401">
    <property type="entry name" value="Dynamin_GTPase"/>
</dbReference>
<dbReference type="InterPro" id="IPR045063">
    <property type="entry name" value="Dynamin_N"/>
</dbReference>
<dbReference type="InterPro" id="IPR030381">
    <property type="entry name" value="G_DYNAMIN_dom"/>
</dbReference>
<dbReference type="InterPro" id="IPR045817">
    <property type="entry name" value="OPA1_C"/>
</dbReference>
<dbReference type="InterPro" id="IPR027417">
    <property type="entry name" value="P-loop_NTPase"/>
</dbReference>
<dbReference type="PANTHER" id="PTHR11566">
    <property type="entry name" value="DYNAMIN"/>
    <property type="match status" value="1"/>
</dbReference>
<dbReference type="PANTHER" id="PTHR11566:SF67">
    <property type="entry name" value="DYNAMIN-LIKE 120 KDA PROTEIN, MITOCHONDRIAL"/>
    <property type="match status" value="1"/>
</dbReference>
<dbReference type="Pfam" id="PF00350">
    <property type="entry name" value="Dynamin_N"/>
    <property type="match status" value="1"/>
</dbReference>
<dbReference type="Pfam" id="PF19434">
    <property type="entry name" value="OPA1_C"/>
    <property type="match status" value="1"/>
</dbReference>
<dbReference type="PRINTS" id="PR00195">
    <property type="entry name" value="DYNAMIN"/>
</dbReference>
<dbReference type="SMART" id="SM00053">
    <property type="entry name" value="DYNc"/>
    <property type="match status" value="1"/>
</dbReference>
<dbReference type="SUPFAM" id="SSF52540">
    <property type="entry name" value="P-loop containing nucleoside triphosphate hydrolases"/>
    <property type="match status" value="1"/>
</dbReference>
<dbReference type="PROSITE" id="PS51718">
    <property type="entry name" value="G_DYNAMIN_2"/>
    <property type="match status" value="1"/>
</dbReference>
<keyword id="KW-0007">Acetylation</keyword>
<keyword id="KW-0025">Alternative splicing</keyword>
<keyword id="KW-0053">Apoptosis</keyword>
<keyword id="KW-0175">Coiled coil</keyword>
<keyword id="KW-1015">Disulfide bond</keyword>
<keyword id="KW-0342">GTP-binding</keyword>
<keyword id="KW-0378">Hydrolase</keyword>
<keyword id="KW-0446">Lipid-binding</keyword>
<keyword id="KW-0460">Magnesium</keyword>
<keyword id="KW-0472">Membrane</keyword>
<keyword id="KW-0479">Metal-binding</keyword>
<keyword id="KW-0496">Mitochondrion</keyword>
<keyword id="KW-0999">Mitochondrion inner membrane</keyword>
<keyword id="KW-0547">Nucleotide-binding</keyword>
<keyword id="KW-1185">Reference proteome</keyword>
<keyword id="KW-0809">Transit peptide</keyword>
<keyword id="KW-0812">Transmembrane</keyword>
<keyword id="KW-1133">Transmembrane helix</keyword>
<organism>
    <name type="scientific">Mus musculus</name>
    <name type="common">Mouse</name>
    <dbReference type="NCBI Taxonomy" id="10090"/>
    <lineage>
        <taxon>Eukaryota</taxon>
        <taxon>Metazoa</taxon>
        <taxon>Chordata</taxon>
        <taxon>Craniata</taxon>
        <taxon>Vertebrata</taxon>
        <taxon>Euteleostomi</taxon>
        <taxon>Mammalia</taxon>
        <taxon>Eutheria</taxon>
        <taxon>Euarchontoglires</taxon>
        <taxon>Glires</taxon>
        <taxon>Rodentia</taxon>
        <taxon>Myomorpha</taxon>
        <taxon>Muroidea</taxon>
        <taxon>Muridae</taxon>
        <taxon>Murinae</taxon>
        <taxon>Mus</taxon>
        <taxon>Mus</taxon>
    </lineage>
</organism>